<protein>
    <recommendedName>
        <fullName>ATP synthase subunit b 2</fullName>
    </recommendedName>
    <alternativeName>
        <fullName>ATP synthase F(0) sector subunit b 2</fullName>
    </alternativeName>
    <alternativeName>
        <fullName>ATPase subunit I 2</fullName>
    </alternativeName>
    <alternativeName>
        <fullName>F-type ATPase subunit b 2</fullName>
        <shortName>F-ATPase subunit b 2</shortName>
    </alternativeName>
</protein>
<reference key="1">
    <citation type="submission" date="2006-03" db="EMBL/GenBank/DDBJ databases">
        <title>Complete sequence of Rhodopseudomonas palustris BisB5.</title>
        <authorList>
            <consortium name="US DOE Joint Genome Institute"/>
            <person name="Copeland A."/>
            <person name="Lucas S."/>
            <person name="Lapidus A."/>
            <person name="Barry K."/>
            <person name="Detter J.C."/>
            <person name="Glavina del Rio T."/>
            <person name="Hammon N."/>
            <person name="Israni S."/>
            <person name="Dalin E."/>
            <person name="Tice H."/>
            <person name="Pitluck S."/>
            <person name="Chain P."/>
            <person name="Malfatti S."/>
            <person name="Shin M."/>
            <person name="Vergez L."/>
            <person name="Schmutz J."/>
            <person name="Larimer F."/>
            <person name="Land M."/>
            <person name="Hauser L."/>
            <person name="Pelletier D.A."/>
            <person name="Kyrpides N."/>
            <person name="Lykidis A."/>
            <person name="Oda Y."/>
            <person name="Harwood C.S."/>
            <person name="Richardson P."/>
        </authorList>
    </citation>
    <scope>NUCLEOTIDE SEQUENCE [LARGE SCALE GENOMIC DNA]</scope>
    <source>
        <strain>BisB5</strain>
    </source>
</reference>
<dbReference type="EMBL" id="CP000283">
    <property type="protein sequence ID" value="ABE38066.1"/>
    <property type="molecule type" value="Genomic_DNA"/>
</dbReference>
<dbReference type="SMR" id="Q13CX3"/>
<dbReference type="STRING" id="316057.RPD_0828"/>
<dbReference type="KEGG" id="rpd:RPD_0828"/>
<dbReference type="eggNOG" id="COG0711">
    <property type="taxonomic scope" value="Bacteria"/>
</dbReference>
<dbReference type="HOGENOM" id="CLU_079215_1_2_5"/>
<dbReference type="BioCyc" id="RPAL316057:RPD_RS04220-MONOMER"/>
<dbReference type="Proteomes" id="UP000001818">
    <property type="component" value="Chromosome"/>
</dbReference>
<dbReference type="GO" id="GO:0005886">
    <property type="term" value="C:plasma membrane"/>
    <property type="evidence" value="ECO:0007669"/>
    <property type="project" value="UniProtKB-SubCell"/>
</dbReference>
<dbReference type="GO" id="GO:0045259">
    <property type="term" value="C:proton-transporting ATP synthase complex"/>
    <property type="evidence" value="ECO:0007669"/>
    <property type="project" value="UniProtKB-KW"/>
</dbReference>
<dbReference type="GO" id="GO:0046933">
    <property type="term" value="F:proton-transporting ATP synthase activity, rotational mechanism"/>
    <property type="evidence" value="ECO:0007669"/>
    <property type="project" value="UniProtKB-UniRule"/>
</dbReference>
<dbReference type="GO" id="GO:0046961">
    <property type="term" value="F:proton-transporting ATPase activity, rotational mechanism"/>
    <property type="evidence" value="ECO:0007669"/>
    <property type="project" value="TreeGrafter"/>
</dbReference>
<dbReference type="CDD" id="cd06503">
    <property type="entry name" value="ATP-synt_Fo_b"/>
    <property type="match status" value="1"/>
</dbReference>
<dbReference type="Gene3D" id="6.10.250.1580">
    <property type="match status" value="1"/>
</dbReference>
<dbReference type="HAMAP" id="MF_01398">
    <property type="entry name" value="ATP_synth_b_bprime"/>
    <property type="match status" value="1"/>
</dbReference>
<dbReference type="InterPro" id="IPR002146">
    <property type="entry name" value="ATP_synth_b/b'su_bac/chlpt"/>
</dbReference>
<dbReference type="InterPro" id="IPR050059">
    <property type="entry name" value="ATP_synthase_B_chain"/>
</dbReference>
<dbReference type="PANTHER" id="PTHR33445:SF1">
    <property type="entry name" value="ATP SYNTHASE SUBUNIT B"/>
    <property type="match status" value="1"/>
</dbReference>
<dbReference type="PANTHER" id="PTHR33445">
    <property type="entry name" value="ATP SYNTHASE SUBUNIT B', CHLOROPLASTIC"/>
    <property type="match status" value="1"/>
</dbReference>
<dbReference type="Pfam" id="PF00430">
    <property type="entry name" value="ATP-synt_B"/>
    <property type="match status" value="1"/>
</dbReference>
<proteinExistence type="inferred from homology"/>
<feature type="chain" id="PRO_0000369042" description="ATP synthase subunit b 2">
    <location>
        <begin position="1"/>
        <end position="185"/>
    </location>
</feature>
<feature type="transmembrane region" description="Helical" evidence="2">
    <location>
        <begin position="37"/>
        <end position="57"/>
    </location>
</feature>
<feature type="region of interest" description="Disordered" evidence="3">
    <location>
        <begin position="1"/>
        <end position="23"/>
    </location>
</feature>
<feature type="compositionally biased region" description="Low complexity" evidence="3">
    <location>
        <begin position="9"/>
        <end position="18"/>
    </location>
</feature>
<evidence type="ECO:0000250" key="1"/>
<evidence type="ECO:0000255" key="2"/>
<evidence type="ECO:0000256" key="3">
    <source>
        <dbReference type="SAM" id="MobiDB-lite"/>
    </source>
</evidence>
<evidence type="ECO:0000305" key="4"/>
<organism>
    <name type="scientific">Rhodopseudomonas palustris (strain BisB5)</name>
    <dbReference type="NCBI Taxonomy" id="316057"/>
    <lineage>
        <taxon>Bacteria</taxon>
        <taxon>Pseudomonadati</taxon>
        <taxon>Pseudomonadota</taxon>
        <taxon>Alphaproteobacteria</taxon>
        <taxon>Hyphomicrobiales</taxon>
        <taxon>Nitrobacteraceae</taxon>
        <taxon>Rhodopseudomonas</taxon>
    </lineage>
</organism>
<sequence>MAEGHGDAKGATAHTAADGGHKAPFPPFQKETFASQLVSLTIAFVALYLIVSKIILPRVGGVIEERQKTIEGDLAAAQKLKGESDDALKAYEAELAQARSRAQAIGAETREKLNAAAEAERKTLEQRLAAKIADAEKTISATRTAAMGNVRGIASEAAAAIVQQLAGIQPDSKALDSAVNASIKG</sequence>
<comment type="function">
    <text evidence="1">F(1)F(0) ATP synthase produces ATP from ADP in the presence of a proton or sodium gradient. F-type ATPases consist of two structural domains, F(1) containing the extramembraneous catalytic core and F(0) containing the membrane proton channel, linked together by a central stalk and a peripheral stalk. During catalysis, ATP synthesis in the catalytic domain of F(1) is coupled via a rotary mechanism of the central stalk subunits to proton translocation (By similarity).</text>
</comment>
<comment type="function">
    <text evidence="1">Component of the F(0) channel, it forms part of the peripheral stalk, linking F(1) to F(0). The b'-subunit is a diverged and duplicated form of b found in plants and photosynthetic bacteria (By similarity).</text>
</comment>
<comment type="subunit">
    <text evidence="1">F-type ATPases have 2 components, F(1) - the catalytic core - and F(0) - the membrane proton channel. F(1) has five subunits: alpha(3), beta(3), gamma(1), delta(1), epsilon(1). F(0) has three main subunits: a(1), b(2) and c(10-14). The alpha and beta chains form an alternating ring which encloses part of the gamma chain. F(1) is attached to F(0) by a central stalk formed by the gamma and epsilon chains, while a peripheral stalk is formed by the delta and b chains (By similarity).</text>
</comment>
<comment type="subcellular location">
    <subcellularLocation>
        <location evidence="1">Cell inner membrane</location>
        <topology evidence="1">Single-pass membrane protein</topology>
    </subcellularLocation>
</comment>
<comment type="similarity">
    <text evidence="4">Belongs to the ATPase B chain family.</text>
</comment>
<gene>
    <name type="primary">atpF2</name>
    <name type="synonym">atpG</name>
    <name type="ordered locus">RPD_0828</name>
</gene>
<accession>Q13CX3</accession>
<keyword id="KW-0066">ATP synthesis</keyword>
<keyword id="KW-0997">Cell inner membrane</keyword>
<keyword id="KW-1003">Cell membrane</keyword>
<keyword id="KW-0138">CF(0)</keyword>
<keyword id="KW-0375">Hydrogen ion transport</keyword>
<keyword id="KW-0406">Ion transport</keyword>
<keyword id="KW-0472">Membrane</keyword>
<keyword id="KW-0812">Transmembrane</keyword>
<keyword id="KW-1133">Transmembrane helix</keyword>
<keyword id="KW-0813">Transport</keyword>
<name>ATPF2_RHOPS</name>